<protein>
    <recommendedName>
        <fullName evidence="1">Ribosomal RNA small subunit methyltransferase G</fullName>
        <ecNumber evidence="1">2.1.1.-</ecNumber>
    </recommendedName>
    <alternativeName>
        <fullName evidence="1">16S rRNA 7-methylguanosine methyltransferase</fullName>
        <shortName evidence="1">16S rRNA m7G methyltransferase</shortName>
    </alternativeName>
</protein>
<feature type="chain" id="PRO_1000118173" description="Ribosomal RNA small subunit methyltransferase G">
    <location>
        <begin position="1"/>
        <end position="239"/>
    </location>
</feature>
<feature type="binding site" evidence="1">
    <location>
        <position position="77"/>
    </location>
    <ligand>
        <name>S-adenosyl-L-methionine</name>
        <dbReference type="ChEBI" id="CHEBI:59789"/>
    </ligand>
</feature>
<feature type="binding site" evidence="1">
    <location>
        <position position="82"/>
    </location>
    <ligand>
        <name>S-adenosyl-L-methionine</name>
        <dbReference type="ChEBI" id="CHEBI:59789"/>
    </ligand>
</feature>
<feature type="binding site" evidence="1">
    <location>
        <begin position="128"/>
        <end position="129"/>
    </location>
    <ligand>
        <name>S-adenosyl-L-methionine</name>
        <dbReference type="ChEBI" id="CHEBI:59789"/>
    </ligand>
</feature>
<feature type="binding site" evidence="1">
    <location>
        <position position="147"/>
    </location>
    <ligand>
        <name>S-adenosyl-L-methionine</name>
        <dbReference type="ChEBI" id="CHEBI:59789"/>
    </ligand>
</feature>
<reference key="1">
    <citation type="submission" date="2009-04" db="EMBL/GenBank/DDBJ databases">
        <title>Genome sequence of Bacillus anthracis A0248.</title>
        <authorList>
            <person name="Dodson R.J."/>
            <person name="Munk A.C."/>
            <person name="Bruce D."/>
            <person name="Detter C."/>
            <person name="Tapia R."/>
            <person name="Sutton G."/>
            <person name="Sims D."/>
            <person name="Brettin T."/>
        </authorList>
    </citation>
    <scope>NUCLEOTIDE SEQUENCE [LARGE SCALE GENOMIC DNA]</scope>
    <source>
        <strain>A0248</strain>
    </source>
</reference>
<organism>
    <name type="scientific">Bacillus anthracis (strain A0248)</name>
    <dbReference type="NCBI Taxonomy" id="592021"/>
    <lineage>
        <taxon>Bacteria</taxon>
        <taxon>Bacillati</taxon>
        <taxon>Bacillota</taxon>
        <taxon>Bacilli</taxon>
        <taxon>Bacillales</taxon>
        <taxon>Bacillaceae</taxon>
        <taxon>Bacillus</taxon>
        <taxon>Bacillus cereus group</taxon>
    </lineage>
</organism>
<keyword id="KW-0963">Cytoplasm</keyword>
<keyword id="KW-0489">Methyltransferase</keyword>
<keyword id="KW-0698">rRNA processing</keyword>
<keyword id="KW-0949">S-adenosyl-L-methionine</keyword>
<keyword id="KW-0808">Transferase</keyword>
<accession>C3P3F3</accession>
<dbReference type="EC" id="2.1.1.-" evidence="1"/>
<dbReference type="EMBL" id="CP001598">
    <property type="protein sequence ID" value="ACQ46351.1"/>
    <property type="molecule type" value="Genomic_DNA"/>
</dbReference>
<dbReference type="RefSeq" id="WP_001019621.1">
    <property type="nucleotide sequence ID" value="NC_012659.1"/>
</dbReference>
<dbReference type="SMR" id="C3P3F3"/>
<dbReference type="GeneID" id="93005640"/>
<dbReference type="KEGG" id="bai:BAA_5766"/>
<dbReference type="HOGENOM" id="CLU_065341_0_2_9"/>
<dbReference type="GO" id="GO:0005829">
    <property type="term" value="C:cytosol"/>
    <property type="evidence" value="ECO:0007669"/>
    <property type="project" value="TreeGrafter"/>
</dbReference>
<dbReference type="GO" id="GO:0070043">
    <property type="term" value="F:rRNA (guanine-N7-)-methyltransferase activity"/>
    <property type="evidence" value="ECO:0007669"/>
    <property type="project" value="UniProtKB-UniRule"/>
</dbReference>
<dbReference type="CDD" id="cd02440">
    <property type="entry name" value="AdoMet_MTases"/>
    <property type="match status" value="1"/>
</dbReference>
<dbReference type="FunFam" id="3.40.50.150:FF:000041">
    <property type="entry name" value="Ribosomal RNA small subunit methyltransferase G"/>
    <property type="match status" value="1"/>
</dbReference>
<dbReference type="Gene3D" id="3.40.50.150">
    <property type="entry name" value="Vaccinia Virus protein VP39"/>
    <property type="match status" value="1"/>
</dbReference>
<dbReference type="HAMAP" id="MF_00074">
    <property type="entry name" value="16SrRNA_methyltr_G"/>
    <property type="match status" value="1"/>
</dbReference>
<dbReference type="InterPro" id="IPR003682">
    <property type="entry name" value="rRNA_ssu_MeTfrase_G"/>
</dbReference>
<dbReference type="InterPro" id="IPR029063">
    <property type="entry name" value="SAM-dependent_MTases_sf"/>
</dbReference>
<dbReference type="NCBIfam" id="TIGR00138">
    <property type="entry name" value="rsmG_gidB"/>
    <property type="match status" value="1"/>
</dbReference>
<dbReference type="PANTHER" id="PTHR31760">
    <property type="entry name" value="S-ADENOSYL-L-METHIONINE-DEPENDENT METHYLTRANSFERASES SUPERFAMILY PROTEIN"/>
    <property type="match status" value="1"/>
</dbReference>
<dbReference type="PANTHER" id="PTHR31760:SF0">
    <property type="entry name" value="S-ADENOSYL-L-METHIONINE-DEPENDENT METHYLTRANSFERASES SUPERFAMILY PROTEIN"/>
    <property type="match status" value="1"/>
</dbReference>
<dbReference type="Pfam" id="PF02527">
    <property type="entry name" value="GidB"/>
    <property type="match status" value="1"/>
</dbReference>
<dbReference type="PIRSF" id="PIRSF003078">
    <property type="entry name" value="GidB"/>
    <property type="match status" value="1"/>
</dbReference>
<dbReference type="SUPFAM" id="SSF53335">
    <property type="entry name" value="S-adenosyl-L-methionine-dependent methyltransferases"/>
    <property type="match status" value="1"/>
</dbReference>
<proteinExistence type="inferred from homology"/>
<evidence type="ECO:0000255" key="1">
    <source>
        <dbReference type="HAMAP-Rule" id="MF_00074"/>
    </source>
</evidence>
<sequence length="239" mass="27196">MNIEQFQSMLEEKGITLSSRQLEQFEIYFETLVEWNEKMNLTAITEKEEVYLKHFFDSITAAFYYDFSKPFSICDVGAGAGFPSIPLKICFPHLKVTIVDSLQKRINFLNHLAQKLELSDVAFCHDRAETFGKKEGVREAYDIVMARAVARLSVLSELCLPLVKVGGTFIAMKGAAANEEIENGKYALEVLGGDLKEMSTFQLPFEESERNILLIEKKRKTPKKYPRKPGTPNKLPIEK</sequence>
<gene>
    <name evidence="1" type="primary">rsmG</name>
    <name type="ordered locus">BAA_5766</name>
</gene>
<comment type="function">
    <text evidence="1">Specifically methylates the N7 position of guanine in position 535 of 16S rRNA.</text>
</comment>
<comment type="subcellular location">
    <subcellularLocation>
        <location evidence="1">Cytoplasm</location>
    </subcellularLocation>
</comment>
<comment type="similarity">
    <text evidence="1">Belongs to the methyltransferase superfamily. RNA methyltransferase RsmG family.</text>
</comment>
<name>RSMG_BACAA</name>